<sequence length="1034" mass="114272">MAVKNPFGFTTGPVTFWLIVVYAAFLIPLVWIHESVPAVPSSSKNPYPQLNVTEAWHDLTHITRKYHPYNSRANDEVGAYFMKRIEEILVRNKVEYTKEKDAGGVIWPQEAYDAPAPAKRDVQRRDSKGPAVTIFDDTISNTTYLGTSGSFNQAGAYGTYFEGTNKLVYIRGTLDEDGEWWNGKRDPRKIGQGGVLVNAHYDSVSSGYGATDDGMGCVSILQILNHYTSPGHQPMRGIVLLLNNGEEDGLYGAKVYHYSPLYYFTTSFVNLEGAGAGGRAILFRTTDLEVTKGYEGAPHPFGSVVAADGFKLGAIRSETDYKVWTESYGQRGLDIAFYRPRARYHTNQDDTRHASQESLWHMLSNSLAAVDNLQHTTGYFSGSRNDGDKKKVASGSGTDGVWFDMFGTGFAILELRGLFAWTLTLLIVSPLVLALVTYILSRKDKYYFFSRKVTADEDDEPVSVGGWKGFFRFPFALVLSASITVLSAFLIRRVNPHIIYSSPYAVWAMTLSLFFLVFWTIAKGASVVRPSALQRGYAHIWLFVISWVILVAVTAAADRFKIASGYPFAFFHSAVFVSALISLCDLFALPSKQEFARNAHNDQQTRDNISEVPNSDALISSRHSHVEDDVAEEPTETTPLRSGENGNGNNGTIRTTFATTYRRSLSAIMRTPDEEENKETEQQPYDHEQQWSANLPSWTWFFQLLLLAPITITVFLQIALFIVSAIHSAAADGNDPILVYAAIAAFSIIILLPATPFIHRASFYLPLFLLLVFFVTLIYNLVAFPFSAENRLKVRFQQTLDLDANTSVISITGLEKYTRKMIAELPSGAGQPVNCTPGYGLTSDCRYNGAAVMPNLPQFTHALPANVSKGRYANLVTVNISRSDSSSKLEFGIDAAESKVCNLAFDTPVSFNVRGSAGIDPIFSRPTEQGVRMLTLWRRDASIPWVVDVEPIKTKAVPAGVLAKSSDSDAGAVHEDLRVRKSAELSGTIACQWSDANVLGTIPAFDEALQFSPDWIAVTKASVGLVEGRKKFRA</sequence>
<name>PFF1_COLGM</name>
<protein>
    <recommendedName>
        <fullName evidence="1">Vacuolar membrane protease</fullName>
        <ecNumber evidence="6">3.4.-.-</ecNumber>
    </recommendedName>
    <alternativeName>
        <fullName evidence="1">FXNA-related family protease 1</fullName>
    </alternativeName>
</protein>
<comment type="function">
    <text evidence="1">May be involved in vacuolar sorting and osmoregulation.</text>
</comment>
<comment type="cofactor">
    <cofactor evidence="2">
        <name>Zn(2+)</name>
        <dbReference type="ChEBI" id="CHEBI:29105"/>
    </cofactor>
    <text evidence="2">Binds 2 Zn(2+) ions per subunit.</text>
</comment>
<comment type="subcellular location">
    <subcellularLocation>
        <location evidence="1">Vacuole membrane</location>
        <topology evidence="3">Multi-pass membrane protein</topology>
    </subcellularLocation>
</comment>
<comment type="similarity">
    <text evidence="6">Belongs to the peptidase M28 family.</text>
</comment>
<gene>
    <name type="ORF">GLRG_01223</name>
</gene>
<reference key="1">
    <citation type="journal article" date="2012" name="Nat. Genet.">
        <title>Lifestyle transitions in plant pathogenic Colletotrichum fungi deciphered by genome and transcriptome analyses.</title>
        <authorList>
            <person name="O'Connell R.J."/>
            <person name="Thon M.R."/>
            <person name="Hacquard S."/>
            <person name="Amyotte S.G."/>
            <person name="Kleemann J."/>
            <person name="Torres M.F."/>
            <person name="Damm U."/>
            <person name="Buiate E.A."/>
            <person name="Epstein L."/>
            <person name="Alkan N."/>
            <person name="Altmueller J."/>
            <person name="Alvarado-Balderrama L."/>
            <person name="Bauser C.A."/>
            <person name="Becker C."/>
            <person name="Birren B.W."/>
            <person name="Chen Z."/>
            <person name="Choi J."/>
            <person name="Crouch J.A."/>
            <person name="Duvick J.P."/>
            <person name="Farman M.A."/>
            <person name="Gan P."/>
            <person name="Heiman D."/>
            <person name="Henrissat B."/>
            <person name="Howard R.J."/>
            <person name="Kabbage M."/>
            <person name="Koch C."/>
            <person name="Kracher B."/>
            <person name="Kubo Y."/>
            <person name="Law A.D."/>
            <person name="Lebrun M.-H."/>
            <person name="Lee Y.-H."/>
            <person name="Miyara I."/>
            <person name="Moore N."/>
            <person name="Neumann U."/>
            <person name="Nordstroem K."/>
            <person name="Panaccione D.G."/>
            <person name="Panstruga R."/>
            <person name="Place M."/>
            <person name="Proctor R.H."/>
            <person name="Prusky D."/>
            <person name="Rech G."/>
            <person name="Reinhardt R."/>
            <person name="Rollins J.A."/>
            <person name="Rounsley S."/>
            <person name="Schardl C.L."/>
            <person name="Schwartz D.C."/>
            <person name="Shenoy N."/>
            <person name="Shirasu K."/>
            <person name="Sikhakolli U.R."/>
            <person name="Stueber K."/>
            <person name="Sukno S.A."/>
            <person name="Sweigard J.A."/>
            <person name="Takano Y."/>
            <person name="Takahara H."/>
            <person name="Trail F."/>
            <person name="van der Does H.C."/>
            <person name="Voll L.M."/>
            <person name="Will I."/>
            <person name="Young S."/>
            <person name="Zeng Q."/>
            <person name="Zhang J."/>
            <person name="Zhou S."/>
            <person name="Dickman M.B."/>
            <person name="Schulze-Lefert P."/>
            <person name="Ver Loren van Themaat E."/>
            <person name="Ma L.-J."/>
            <person name="Vaillancourt L.J."/>
        </authorList>
    </citation>
    <scope>NUCLEOTIDE SEQUENCE [LARGE SCALE GENOMIC DNA]</scope>
    <source>
        <strain>M1.001 / M2 / FGSC 10212</strain>
    </source>
</reference>
<dbReference type="EC" id="3.4.-.-" evidence="6"/>
<dbReference type="EMBL" id="GG697333">
    <property type="protein sequence ID" value="EFQ26079.1"/>
    <property type="molecule type" value="Genomic_DNA"/>
</dbReference>
<dbReference type="RefSeq" id="XP_008090099.1">
    <property type="nucleotide sequence ID" value="XM_008091908.1"/>
</dbReference>
<dbReference type="SMR" id="E3Q4R4"/>
<dbReference type="STRING" id="645133.E3Q4R4"/>
<dbReference type="EnsemblFungi" id="EFQ26079">
    <property type="protein sequence ID" value="EFQ26079"/>
    <property type="gene ID" value="GLRG_01223"/>
</dbReference>
<dbReference type="GeneID" id="24406588"/>
<dbReference type="VEuPathDB" id="FungiDB:GLRG_01223"/>
<dbReference type="eggNOG" id="KOG2194">
    <property type="taxonomic scope" value="Eukaryota"/>
</dbReference>
<dbReference type="HOGENOM" id="CLU_006412_1_0_1"/>
<dbReference type="OrthoDB" id="76293at2759"/>
<dbReference type="Proteomes" id="UP000008782">
    <property type="component" value="Unassembled WGS sequence"/>
</dbReference>
<dbReference type="GO" id="GO:0005774">
    <property type="term" value="C:vacuolar membrane"/>
    <property type="evidence" value="ECO:0007669"/>
    <property type="project" value="UniProtKB-SubCell"/>
</dbReference>
<dbReference type="GO" id="GO:0046872">
    <property type="term" value="F:metal ion binding"/>
    <property type="evidence" value="ECO:0007669"/>
    <property type="project" value="UniProtKB-KW"/>
</dbReference>
<dbReference type="GO" id="GO:0008235">
    <property type="term" value="F:metalloexopeptidase activity"/>
    <property type="evidence" value="ECO:0007669"/>
    <property type="project" value="InterPro"/>
</dbReference>
<dbReference type="GO" id="GO:0006508">
    <property type="term" value="P:proteolysis"/>
    <property type="evidence" value="ECO:0007669"/>
    <property type="project" value="UniProtKB-KW"/>
</dbReference>
<dbReference type="CDD" id="cd03875">
    <property type="entry name" value="M28_Fxna_like"/>
    <property type="match status" value="1"/>
</dbReference>
<dbReference type="Gene3D" id="3.40.630.10">
    <property type="entry name" value="Zn peptidases"/>
    <property type="match status" value="1"/>
</dbReference>
<dbReference type="InterPro" id="IPR048024">
    <property type="entry name" value="Fxna-like_M28_dom"/>
</dbReference>
<dbReference type="InterPro" id="IPR045175">
    <property type="entry name" value="M28_fam"/>
</dbReference>
<dbReference type="InterPro" id="IPR007484">
    <property type="entry name" value="Peptidase_M28"/>
</dbReference>
<dbReference type="InterPro" id="IPR053975">
    <property type="entry name" value="PFF1_C"/>
</dbReference>
<dbReference type="InterPro" id="IPR053976">
    <property type="entry name" value="PFF1_TM"/>
</dbReference>
<dbReference type="PANTHER" id="PTHR12147">
    <property type="entry name" value="METALLOPEPTIDASE M28 FAMILY MEMBER"/>
    <property type="match status" value="1"/>
</dbReference>
<dbReference type="PANTHER" id="PTHR12147:SF58">
    <property type="entry name" value="VACUOLAR MEMBRANE PROTEASE"/>
    <property type="match status" value="1"/>
</dbReference>
<dbReference type="Pfam" id="PF04389">
    <property type="entry name" value="Peptidase_M28"/>
    <property type="match status" value="1"/>
</dbReference>
<dbReference type="Pfam" id="PF22250">
    <property type="entry name" value="PFF1_C"/>
    <property type="match status" value="1"/>
</dbReference>
<dbReference type="Pfam" id="PF22251">
    <property type="entry name" value="PFF1_TM"/>
    <property type="match status" value="1"/>
</dbReference>
<dbReference type="SUPFAM" id="SSF53187">
    <property type="entry name" value="Zn-dependent exopeptidases"/>
    <property type="match status" value="1"/>
</dbReference>
<evidence type="ECO:0000250" key="1">
    <source>
        <dbReference type="UniProtKB" id="P38244"/>
    </source>
</evidence>
<evidence type="ECO:0000250" key="2">
    <source>
        <dbReference type="UniProtKB" id="P80561"/>
    </source>
</evidence>
<evidence type="ECO:0000255" key="3"/>
<evidence type="ECO:0000255" key="4">
    <source>
        <dbReference type="PROSITE-ProRule" id="PRU00498"/>
    </source>
</evidence>
<evidence type="ECO:0000256" key="5">
    <source>
        <dbReference type="SAM" id="MobiDB-lite"/>
    </source>
</evidence>
<evidence type="ECO:0000305" key="6"/>
<feature type="chain" id="PRO_0000411714" description="Vacuolar membrane protease">
    <location>
        <begin position="1"/>
        <end position="1034"/>
    </location>
</feature>
<feature type="topological domain" description="Cytoplasmic" evidence="1">
    <location>
        <begin position="1"/>
        <end position="11"/>
    </location>
</feature>
<feature type="transmembrane region" description="Helical; Name=1" evidence="3">
    <location>
        <begin position="12"/>
        <end position="32"/>
    </location>
</feature>
<feature type="topological domain" description="Vacuolar" evidence="1">
    <location>
        <begin position="33"/>
        <end position="418"/>
    </location>
</feature>
<feature type="transmembrane region" description="Helical; Name=2" evidence="3">
    <location>
        <begin position="419"/>
        <end position="439"/>
    </location>
</feature>
<feature type="topological domain" description="Cytoplasmic" evidence="1">
    <location>
        <begin position="440"/>
        <end position="470"/>
    </location>
</feature>
<feature type="transmembrane region" description="Helical; Name=3" evidence="3">
    <location>
        <begin position="471"/>
        <end position="491"/>
    </location>
</feature>
<feature type="topological domain" description="Vacuolar" evidence="1">
    <location>
        <begin position="492"/>
        <end position="497"/>
    </location>
</feature>
<feature type="transmembrane region" description="Helical; Name=4" evidence="3">
    <location>
        <begin position="498"/>
        <end position="518"/>
    </location>
</feature>
<feature type="topological domain" description="Cytoplasmic" evidence="1">
    <location>
        <begin position="519"/>
        <end position="536"/>
    </location>
</feature>
<feature type="transmembrane region" description="Helical; Name=5" evidence="3">
    <location>
        <begin position="537"/>
        <end position="557"/>
    </location>
</feature>
<feature type="topological domain" description="Vacuolar" evidence="1">
    <location>
        <begin position="558"/>
        <end position="567"/>
    </location>
</feature>
<feature type="transmembrane region" description="Helical; Name=6" evidence="3">
    <location>
        <begin position="568"/>
        <end position="588"/>
    </location>
</feature>
<feature type="topological domain" description="Cytoplasmic" evidence="1">
    <location>
        <begin position="589"/>
        <end position="703"/>
    </location>
</feature>
<feature type="transmembrane region" description="Helical; Name=7" evidence="3">
    <location>
        <begin position="704"/>
        <end position="724"/>
    </location>
</feature>
<feature type="topological domain" description="Vacuolar" evidence="1">
    <location>
        <begin position="725"/>
        <end position="736"/>
    </location>
</feature>
<feature type="transmembrane region" description="Helical; Name=8" evidence="3">
    <location>
        <begin position="737"/>
        <end position="757"/>
    </location>
</feature>
<feature type="topological domain" description="Cytoplasmic" evidence="1">
    <location>
        <begin position="758"/>
        <end position="762"/>
    </location>
</feature>
<feature type="transmembrane region" description="Helical; Name=9" evidence="3">
    <location>
        <begin position="763"/>
        <end position="783"/>
    </location>
</feature>
<feature type="topological domain" description="Vacuolar" evidence="1">
    <location>
        <begin position="784"/>
        <end position="1034"/>
    </location>
</feature>
<feature type="region of interest" description="Disordered" evidence="5">
    <location>
        <begin position="623"/>
        <end position="653"/>
    </location>
</feature>
<feature type="active site" description="Proton acceptor" evidence="2">
    <location>
        <position position="246"/>
    </location>
</feature>
<feature type="binding site" evidence="2">
    <location>
        <position position="200"/>
    </location>
    <ligand>
        <name>Zn(2+)</name>
        <dbReference type="ChEBI" id="CHEBI:29105"/>
        <label>1</label>
        <note>catalytic</note>
    </ligand>
</feature>
<feature type="binding site" evidence="2">
    <location>
        <position position="212"/>
    </location>
    <ligand>
        <name>Zn(2+)</name>
        <dbReference type="ChEBI" id="CHEBI:29105"/>
        <label>1</label>
        <note>catalytic</note>
    </ligand>
</feature>
<feature type="binding site" evidence="2">
    <location>
        <position position="212"/>
    </location>
    <ligand>
        <name>Zn(2+)</name>
        <dbReference type="ChEBI" id="CHEBI:29105"/>
        <label>2</label>
        <note>catalytic</note>
    </ligand>
</feature>
<feature type="binding site" evidence="2">
    <location>
        <position position="247"/>
    </location>
    <ligand>
        <name>Zn(2+)</name>
        <dbReference type="ChEBI" id="CHEBI:29105"/>
        <label>2</label>
        <note>catalytic</note>
    </ligand>
</feature>
<feature type="binding site" evidence="2">
    <location>
        <position position="272"/>
    </location>
    <ligand>
        <name>Zn(2+)</name>
        <dbReference type="ChEBI" id="CHEBI:29105"/>
        <label>1</label>
        <note>catalytic</note>
    </ligand>
</feature>
<feature type="binding site" evidence="2">
    <location>
        <position position="345"/>
    </location>
    <ligand>
        <name>Zn(2+)</name>
        <dbReference type="ChEBI" id="CHEBI:29105"/>
        <label>2</label>
        <note>catalytic</note>
    </ligand>
</feature>
<feature type="site" description="Transition state stabilizer" evidence="2">
    <location>
        <position position="344"/>
    </location>
</feature>
<feature type="glycosylation site" description="N-linked (GlcNAc...) asparagine" evidence="4">
    <location>
        <position position="51"/>
    </location>
</feature>
<feature type="glycosylation site" description="N-linked (GlcNAc...) asparagine" evidence="4">
    <location>
        <position position="141"/>
    </location>
</feature>
<feature type="glycosylation site" description="N-linked (GlcNAc...) asparagine" evidence="4">
    <location>
        <position position="805"/>
    </location>
</feature>
<feature type="glycosylation site" description="N-linked (GlcNAc...) asparagine" evidence="4">
    <location>
        <position position="866"/>
    </location>
</feature>
<feature type="glycosylation site" description="N-linked (GlcNAc...) asparagine" evidence="4">
    <location>
        <position position="879"/>
    </location>
</feature>
<keyword id="KW-0325">Glycoprotein</keyword>
<keyword id="KW-0378">Hydrolase</keyword>
<keyword id="KW-0472">Membrane</keyword>
<keyword id="KW-0479">Metal-binding</keyword>
<keyword id="KW-0482">Metalloprotease</keyword>
<keyword id="KW-0645">Protease</keyword>
<keyword id="KW-1185">Reference proteome</keyword>
<keyword id="KW-0812">Transmembrane</keyword>
<keyword id="KW-1133">Transmembrane helix</keyword>
<keyword id="KW-0926">Vacuole</keyword>
<keyword id="KW-0862">Zinc</keyword>
<proteinExistence type="inferred from homology"/>
<organism>
    <name type="scientific">Colletotrichum graminicola (strain M1.001 / M2 / FGSC 10212)</name>
    <name type="common">Maize anthracnose fungus</name>
    <name type="synonym">Glomerella graminicola</name>
    <dbReference type="NCBI Taxonomy" id="645133"/>
    <lineage>
        <taxon>Eukaryota</taxon>
        <taxon>Fungi</taxon>
        <taxon>Dikarya</taxon>
        <taxon>Ascomycota</taxon>
        <taxon>Pezizomycotina</taxon>
        <taxon>Sordariomycetes</taxon>
        <taxon>Hypocreomycetidae</taxon>
        <taxon>Glomerellales</taxon>
        <taxon>Glomerellaceae</taxon>
        <taxon>Colletotrichum</taxon>
        <taxon>Colletotrichum graminicola species complex</taxon>
    </lineage>
</organism>
<accession>E3Q4R4</accession>